<dbReference type="EMBL" id="X69067">
    <property type="protein sequence ID" value="CAA48809.1"/>
    <property type="molecule type" value="Genomic_DNA"/>
</dbReference>
<dbReference type="PIR" id="S60641">
    <property type="entry name" value="S60641"/>
</dbReference>
<dbReference type="RefSeq" id="NP_007112.1">
    <property type="nucleotide sequence ID" value="NC_001620.1"/>
</dbReference>
<dbReference type="SMR" id="Q37708"/>
<dbReference type="GeneID" id="807798"/>
<dbReference type="KEGG" id="afra:807798"/>
<dbReference type="CTD" id="4508"/>
<dbReference type="GO" id="GO:0005743">
    <property type="term" value="C:mitochondrial inner membrane"/>
    <property type="evidence" value="ECO:0007669"/>
    <property type="project" value="UniProtKB-SubCell"/>
</dbReference>
<dbReference type="GO" id="GO:0045259">
    <property type="term" value="C:proton-transporting ATP synthase complex"/>
    <property type="evidence" value="ECO:0007669"/>
    <property type="project" value="UniProtKB-KW"/>
</dbReference>
<dbReference type="GO" id="GO:0046933">
    <property type="term" value="F:proton-transporting ATP synthase activity, rotational mechanism"/>
    <property type="evidence" value="ECO:0007669"/>
    <property type="project" value="TreeGrafter"/>
</dbReference>
<dbReference type="CDD" id="cd00310">
    <property type="entry name" value="ATP-synt_Fo_a_6"/>
    <property type="match status" value="1"/>
</dbReference>
<dbReference type="Gene3D" id="1.20.120.220">
    <property type="entry name" value="ATP synthase, F0 complex, subunit A"/>
    <property type="match status" value="1"/>
</dbReference>
<dbReference type="InterPro" id="IPR000568">
    <property type="entry name" value="ATP_synth_F0_asu"/>
</dbReference>
<dbReference type="InterPro" id="IPR023011">
    <property type="entry name" value="ATP_synth_F0_asu_AS"/>
</dbReference>
<dbReference type="InterPro" id="IPR045083">
    <property type="entry name" value="ATP_synth_F0_asu_bact/mt"/>
</dbReference>
<dbReference type="InterPro" id="IPR035908">
    <property type="entry name" value="F0_ATP_A_sf"/>
</dbReference>
<dbReference type="NCBIfam" id="TIGR01131">
    <property type="entry name" value="ATP_synt_6_or_A"/>
    <property type="match status" value="1"/>
</dbReference>
<dbReference type="PANTHER" id="PTHR11410">
    <property type="entry name" value="ATP SYNTHASE SUBUNIT A"/>
    <property type="match status" value="1"/>
</dbReference>
<dbReference type="PANTHER" id="PTHR11410:SF0">
    <property type="entry name" value="ATP SYNTHASE SUBUNIT A"/>
    <property type="match status" value="1"/>
</dbReference>
<dbReference type="Pfam" id="PF00119">
    <property type="entry name" value="ATP-synt_A"/>
    <property type="match status" value="1"/>
</dbReference>
<dbReference type="PRINTS" id="PR00123">
    <property type="entry name" value="ATPASEA"/>
</dbReference>
<dbReference type="SUPFAM" id="SSF81336">
    <property type="entry name" value="F1F0 ATP synthase subunit A"/>
    <property type="match status" value="1"/>
</dbReference>
<dbReference type="PROSITE" id="PS00449">
    <property type="entry name" value="ATPASE_A"/>
    <property type="match status" value="1"/>
</dbReference>
<keyword id="KW-0066">ATP synthesis</keyword>
<keyword id="KW-0138">CF(0)</keyword>
<keyword id="KW-0375">Hydrogen ion transport</keyword>
<keyword id="KW-0406">Ion transport</keyword>
<keyword id="KW-0472">Membrane</keyword>
<keyword id="KW-0496">Mitochondrion</keyword>
<keyword id="KW-0999">Mitochondrion inner membrane</keyword>
<keyword id="KW-0812">Transmembrane</keyword>
<keyword id="KW-1133">Transmembrane helix</keyword>
<keyword id="KW-0813">Transport</keyword>
<organism>
    <name type="scientific">Artemia franciscana</name>
    <name type="common">Brine shrimp</name>
    <name type="synonym">Artemia sanfranciscana</name>
    <dbReference type="NCBI Taxonomy" id="6661"/>
    <lineage>
        <taxon>Eukaryota</taxon>
        <taxon>Metazoa</taxon>
        <taxon>Ecdysozoa</taxon>
        <taxon>Arthropoda</taxon>
        <taxon>Crustacea</taxon>
        <taxon>Branchiopoda</taxon>
        <taxon>Anostraca</taxon>
        <taxon>Artemiidae</taxon>
        <taxon>Artemia</taxon>
    </lineage>
</organism>
<sequence>MMASLFSVFDPTSSFLSNWLSMLIPLLFMVMSFWLIPSRPQFLAKSVLMGLNREMSLLMGPASFGANILVIALFLFILFNNFIGLFPYIFTATSHLAVTLSLAVPLWISFILYTWIKETTNALAHLVPLGTPAPLMPFMVLMEIISNMIRPITLSVRLAANMIAGHLLLTLLGAQGTLENLYVTSIVVFSQIILLMLEFSVAIIQSYVFMTLMTLYASE</sequence>
<name>ATP6_ARTSF</name>
<geneLocation type="mitochondrion"/>
<gene>
    <name type="primary">ATP6</name>
</gene>
<comment type="function">
    <text>Mitochondrial membrane ATP synthase (F(1)F(0) ATP synthase or Complex V) produces ATP from ADP in the presence of a proton gradient across the membrane which is generated by electron transport complexes of the respiratory chain. F-type ATPases consist of two structural domains, F(1) - containing the extramembraneous catalytic core and F(0) - containing the membrane proton channel, linked together by a central stalk and a peripheral stalk. During catalysis, ATP synthesis in the catalytic domain of F(1) is coupled via a rotary mechanism of the central stalk subunits to proton translocation. Key component of the proton channel; it may play a direct role in the translocation of protons across the membrane.</text>
</comment>
<comment type="subunit">
    <text>F-type ATPases have 2 components, CF(1) - the catalytic core - and CF(0) - the membrane proton channel. CF(1) has five subunits: alpha(3), beta(3), gamma(1), delta(1), epsilon(1). CF(0) has three main subunits: a, b and c.</text>
</comment>
<comment type="subcellular location">
    <subcellularLocation>
        <location>Mitochondrion inner membrane</location>
        <topology>Multi-pass membrane protein</topology>
    </subcellularLocation>
</comment>
<comment type="similarity">
    <text evidence="2">Belongs to the ATPase A chain family.</text>
</comment>
<protein>
    <recommendedName>
        <fullName>ATP synthase subunit a</fullName>
    </recommendedName>
    <alternativeName>
        <fullName>F-ATPase protein 6</fullName>
    </alternativeName>
</protein>
<reference key="1">
    <citation type="journal article" date="1994" name="J. Mol. Evol.">
        <title>Speciation in the Artemia genus: mitochondrial DNA analysis of bisexual and parthenogenetic brine shrimps.</title>
        <authorList>
            <person name="Perez M.L."/>
            <person name="Valverde J.R."/>
            <person name="Batuecas B."/>
            <person name="Amat F."/>
            <person name="Marco R."/>
            <person name="Garesse R."/>
        </authorList>
    </citation>
    <scope>NUCLEOTIDE SEQUENCE [GENOMIC DNA]</scope>
</reference>
<evidence type="ECO:0000255" key="1"/>
<evidence type="ECO:0000305" key="2"/>
<proteinExistence type="inferred from homology"/>
<accession>Q37708</accession>
<feature type="chain" id="PRO_0000082088" description="ATP synthase subunit a">
    <location>
        <begin position="1"/>
        <end position="219"/>
    </location>
</feature>
<feature type="transmembrane region" description="Helical" evidence="1">
    <location>
        <begin position="16"/>
        <end position="36"/>
    </location>
</feature>
<feature type="transmembrane region" description="Helical" evidence="1">
    <location>
        <begin position="57"/>
        <end position="79"/>
    </location>
</feature>
<feature type="transmembrane region" description="Helical" evidence="1">
    <location>
        <begin position="96"/>
        <end position="116"/>
    </location>
</feature>
<feature type="transmembrane region" description="Helical" evidence="1">
    <location>
        <begin position="122"/>
        <end position="142"/>
    </location>
</feature>
<feature type="transmembrane region" description="Helical" evidence="1">
    <location>
        <begin position="158"/>
        <end position="178"/>
    </location>
</feature>
<feature type="transmembrane region" description="Helical" evidence="1">
    <location>
        <begin position="184"/>
        <end position="204"/>
    </location>
</feature>